<organism>
    <name type="scientific">Shewanella frigidimarina (strain NCIMB 400)</name>
    <dbReference type="NCBI Taxonomy" id="318167"/>
    <lineage>
        <taxon>Bacteria</taxon>
        <taxon>Pseudomonadati</taxon>
        <taxon>Pseudomonadota</taxon>
        <taxon>Gammaproteobacteria</taxon>
        <taxon>Alteromonadales</taxon>
        <taxon>Shewanellaceae</taxon>
        <taxon>Shewanella</taxon>
    </lineage>
</organism>
<gene>
    <name evidence="1" type="primary">rnpA</name>
    <name type="ordered locus">Sfri_4065</name>
</gene>
<dbReference type="EC" id="3.1.26.5" evidence="1"/>
<dbReference type="EMBL" id="CP000447">
    <property type="protein sequence ID" value="ABI73890.1"/>
    <property type="molecule type" value="Genomic_DNA"/>
</dbReference>
<dbReference type="RefSeq" id="WP_011639470.1">
    <property type="nucleotide sequence ID" value="NC_008345.1"/>
</dbReference>
<dbReference type="SMR" id="Q07VS4"/>
<dbReference type="STRING" id="318167.Sfri_4065"/>
<dbReference type="KEGG" id="sfr:Sfri_4065"/>
<dbReference type="eggNOG" id="COG0594">
    <property type="taxonomic scope" value="Bacteria"/>
</dbReference>
<dbReference type="HOGENOM" id="CLU_117179_11_0_6"/>
<dbReference type="OrthoDB" id="9796422at2"/>
<dbReference type="Proteomes" id="UP000000684">
    <property type="component" value="Chromosome"/>
</dbReference>
<dbReference type="GO" id="GO:0030677">
    <property type="term" value="C:ribonuclease P complex"/>
    <property type="evidence" value="ECO:0007669"/>
    <property type="project" value="TreeGrafter"/>
</dbReference>
<dbReference type="GO" id="GO:0042781">
    <property type="term" value="F:3'-tRNA processing endoribonuclease activity"/>
    <property type="evidence" value="ECO:0007669"/>
    <property type="project" value="TreeGrafter"/>
</dbReference>
<dbReference type="GO" id="GO:0004526">
    <property type="term" value="F:ribonuclease P activity"/>
    <property type="evidence" value="ECO:0007669"/>
    <property type="project" value="UniProtKB-UniRule"/>
</dbReference>
<dbReference type="GO" id="GO:0000049">
    <property type="term" value="F:tRNA binding"/>
    <property type="evidence" value="ECO:0007669"/>
    <property type="project" value="UniProtKB-UniRule"/>
</dbReference>
<dbReference type="GO" id="GO:0001682">
    <property type="term" value="P:tRNA 5'-leader removal"/>
    <property type="evidence" value="ECO:0007669"/>
    <property type="project" value="UniProtKB-UniRule"/>
</dbReference>
<dbReference type="FunFam" id="3.30.230.10:FF:000016">
    <property type="entry name" value="Ribonuclease P protein component"/>
    <property type="match status" value="1"/>
</dbReference>
<dbReference type="Gene3D" id="3.30.230.10">
    <property type="match status" value="1"/>
</dbReference>
<dbReference type="HAMAP" id="MF_00227">
    <property type="entry name" value="RNase_P"/>
    <property type="match status" value="1"/>
</dbReference>
<dbReference type="InterPro" id="IPR020568">
    <property type="entry name" value="Ribosomal_Su5_D2-typ_SF"/>
</dbReference>
<dbReference type="InterPro" id="IPR014721">
    <property type="entry name" value="Ribsml_uS5_D2-typ_fold_subgr"/>
</dbReference>
<dbReference type="InterPro" id="IPR000100">
    <property type="entry name" value="RNase_P"/>
</dbReference>
<dbReference type="InterPro" id="IPR020539">
    <property type="entry name" value="RNase_P_CS"/>
</dbReference>
<dbReference type="NCBIfam" id="TIGR00188">
    <property type="entry name" value="rnpA"/>
    <property type="match status" value="1"/>
</dbReference>
<dbReference type="PANTHER" id="PTHR33992">
    <property type="entry name" value="RIBONUCLEASE P PROTEIN COMPONENT"/>
    <property type="match status" value="1"/>
</dbReference>
<dbReference type="PANTHER" id="PTHR33992:SF1">
    <property type="entry name" value="RIBONUCLEASE P PROTEIN COMPONENT"/>
    <property type="match status" value="1"/>
</dbReference>
<dbReference type="Pfam" id="PF00825">
    <property type="entry name" value="Ribonuclease_P"/>
    <property type="match status" value="1"/>
</dbReference>
<dbReference type="SUPFAM" id="SSF54211">
    <property type="entry name" value="Ribosomal protein S5 domain 2-like"/>
    <property type="match status" value="1"/>
</dbReference>
<dbReference type="PROSITE" id="PS00648">
    <property type="entry name" value="RIBONUCLEASE_P"/>
    <property type="match status" value="1"/>
</dbReference>
<name>RNPA_SHEFN</name>
<accession>Q07VS4</accession>
<sequence>MTSYTFSRELRLLTPAQFKSVFSNPIKASSAEITLLAIPNSEQHPRLGLTVAKRFVKRANQRNRIKRVIRDSFRLHQHDIPDIDIVVLVRNGVMEMENAELHKLIEKLWRKLSRRYNG</sequence>
<feature type="chain" id="PRO_1000021459" description="Ribonuclease P protein component">
    <location>
        <begin position="1"/>
        <end position="118"/>
    </location>
</feature>
<keyword id="KW-0255">Endonuclease</keyword>
<keyword id="KW-0378">Hydrolase</keyword>
<keyword id="KW-0540">Nuclease</keyword>
<keyword id="KW-1185">Reference proteome</keyword>
<keyword id="KW-0694">RNA-binding</keyword>
<keyword id="KW-0819">tRNA processing</keyword>
<evidence type="ECO:0000255" key="1">
    <source>
        <dbReference type="HAMAP-Rule" id="MF_00227"/>
    </source>
</evidence>
<reference key="1">
    <citation type="submission" date="2006-08" db="EMBL/GenBank/DDBJ databases">
        <title>Complete sequence of Shewanella frigidimarina NCIMB 400.</title>
        <authorList>
            <consortium name="US DOE Joint Genome Institute"/>
            <person name="Copeland A."/>
            <person name="Lucas S."/>
            <person name="Lapidus A."/>
            <person name="Barry K."/>
            <person name="Detter J.C."/>
            <person name="Glavina del Rio T."/>
            <person name="Hammon N."/>
            <person name="Israni S."/>
            <person name="Dalin E."/>
            <person name="Tice H."/>
            <person name="Pitluck S."/>
            <person name="Fredrickson J.K."/>
            <person name="Kolker E."/>
            <person name="McCuel L.A."/>
            <person name="DiChristina T."/>
            <person name="Nealson K.H."/>
            <person name="Newman D."/>
            <person name="Tiedje J.M."/>
            <person name="Zhou J."/>
            <person name="Romine M.F."/>
            <person name="Culley D.E."/>
            <person name="Serres M."/>
            <person name="Chertkov O."/>
            <person name="Brettin T."/>
            <person name="Bruce D."/>
            <person name="Han C."/>
            <person name="Tapia R."/>
            <person name="Gilna P."/>
            <person name="Schmutz J."/>
            <person name="Larimer F."/>
            <person name="Land M."/>
            <person name="Hauser L."/>
            <person name="Kyrpides N."/>
            <person name="Mikhailova N."/>
            <person name="Richardson P."/>
        </authorList>
    </citation>
    <scope>NUCLEOTIDE SEQUENCE [LARGE SCALE GENOMIC DNA]</scope>
    <source>
        <strain>NCIMB 400</strain>
    </source>
</reference>
<comment type="function">
    <text evidence="1">RNaseP catalyzes the removal of the 5'-leader sequence from pre-tRNA to produce the mature 5'-terminus. It can also cleave other RNA substrates such as 4.5S RNA. The protein component plays an auxiliary but essential role in vivo by binding to the 5'-leader sequence and broadening the substrate specificity of the ribozyme.</text>
</comment>
<comment type="catalytic activity">
    <reaction evidence="1">
        <text>Endonucleolytic cleavage of RNA, removing 5'-extranucleotides from tRNA precursor.</text>
        <dbReference type="EC" id="3.1.26.5"/>
    </reaction>
</comment>
<comment type="subunit">
    <text evidence="1">Consists of a catalytic RNA component (M1 or rnpB) and a protein subunit.</text>
</comment>
<comment type="similarity">
    <text evidence="1">Belongs to the RnpA family.</text>
</comment>
<protein>
    <recommendedName>
        <fullName evidence="1">Ribonuclease P protein component</fullName>
        <shortName evidence="1">RNase P protein</shortName>
        <shortName evidence="1">RNaseP protein</shortName>
        <ecNumber evidence="1">3.1.26.5</ecNumber>
    </recommendedName>
    <alternativeName>
        <fullName evidence="1">Protein C5</fullName>
    </alternativeName>
</protein>
<proteinExistence type="inferred from homology"/>